<proteinExistence type="inferred from homology"/>
<keyword id="KW-0997">Cell inner membrane</keyword>
<keyword id="KW-1003">Cell membrane</keyword>
<keyword id="KW-0472">Membrane</keyword>
<keyword id="KW-0653">Protein transport</keyword>
<keyword id="KW-1185">Reference proteome</keyword>
<keyword id="KW-0811">Translocation</keyword>
<keyword id="KW-0812">Transmembrane</keyword>
<keyword id="KW-1133">Transmembrane helix</keyword>
<keyword id="KW-0813">Transport</keyword>
<dbReference type="EMBL" id="AE017143">
    <property type="protein sequence ID" value="AAP95630.1"/>
    <property type="molecule type" value="Genomic_DNA"/>
</dbReference>
<dbReference type="RefSeq" id="WP_010944682.1">
    <property type="nucleotide sequence ID" value="NC_002940.2"/>
</dbReference>
<dbReference type="SMR" id="Q7VN63"/>
<dbReference type="STRING" id="233412.HD_0716"/>
<dbReference type="GeneID" id="60733177"/>
<dbReference type="KEGG" id="hdu:HD_0716"/>
<dbReference type="eggNOG" id="COG1826">
    <property type="taxonomic scope" value="Bacteria"/>
</dbReference>
<dbReference type="HOGENOM" id="CLU_086034_5_3_6"/>
<dbReference type="OrthoDB" id="7066617at2"/>
<dbReference type="Proteomes" id="UP000001022">
    <property type="component" value="Chromosome"/>
</dbReference>
<dbReference type="GO" id="GO:0033281">
    <property type="term" value="C:TAT protein transport complex"/>
    <property type="evidence" value="ECO:0007669"/>
    <property type="project" value="UniProtKB-UniRule"/>
</dbReference>
<dbReference type="GO" id="GO:0008320">
    <property type="term" value="F:protein transmembrane transporter activity"/>
    <property type="evidence" value="ECO:0007669"/>
    <property type="project" value="UniProtKB-UniRule"/>
</dbReference>
<dbReference type="GO" id="GO:0043953">
    <property type="term" value="P:protein transport by the Tat complex"/>
    <property type="evidence" value="ECO:0007669"/>
    <property type="project" value="UniProtKB-UniRule"/>
</dbReference>
<dbReference type="Gene3D" id="1.20.5.3310">
    <property type="match status" value="1"/>
</dbReference>
<dbReference type="HAMAP" id="MF_00236">
    <property type="entry name" value="TatA_E"/>
    <property type="match status" value="1"/>
</dbReference>
<dbReference type="InterPro" id="IPR003369">
    <property type="entry name" value="TatA/B/E"/>
</dbReference>
<dbReference type="InterPro" id="IPR006312">
    <property type="entry name" value="TatA/E"/>
</dbReference>
<dbReference type="NCBIfam" id="NF002500">
    <property type="entry name" value="PRK01833.1"/>
    <property type="match status" value="1"/>
</dbReference>
<dbReference type="NCBIfam" id="TIGR01411">
    <property type="entry name" value="tatAE"/>
    <property type="match status" value="1"/>
</dbReference>
<dbReference type="PANTHER" id="PTHR42982">
    <property type="entry name" value="SEC-INDEPENDENT PROTEIN TRANSLOCASE PROTEIN TATA"/>
    <property type="match status" value="1"/>
</dbReference>
<dbReference type="PANTHER" id="PTHR42982:SF1">
    <property type="entry name" value="SEC-INDEPENDENT PROTEIN TRANSLOCASE PROTEIN TATA"/>
    <property type="match status" value="1"/>
</dbReference>
<dbReference type="Pfam" id="PF02416">
    <property type="entry name" value="TatA_B_E"/>
    <property type="match status" value="1"/>
</dbReference>
<sequence>MGGISIWQLLIIVAIIVLLFGTKKLRTLGTDLGESVKGFKKAMAEDKSQDANFDKVEAKESTSTTEKTKEKEQA</sequence>
<gene>
    <name evidence="1" type="primary">tatA</name>
    <name type="ordered locus">HD_0716</name>
</gene>
<protein>
    <recommendedName>
        <fullName evidence="1">Sec-independent protein translocase protein TatA</fullName>
    </recommendedName>
</protein>
<name>TATA_HAEDU</name>
<organism>
    <name type="scientific">Haemophilus ducreyi (strain 35000HP / ATCC 700724)</name>
    <dbReference type="NCBI Taxonomy" id="233412"/>
    <lineage>
        <taxon>Bacteria</taxon>
        <taxon>Pseudomonadati</taxon>
        <taxon>Pseudomonadota</taxon>
        <taxon>Gammaproteobacteria</taxon>
        <taxon>Pasteurellales</taxon>
        <taxon>Pasteurellaceae</taxon>
        <taxon>Haemophilus</taxon>
    </lineage>
</organism>
<comment type="function">
    <text evidence="1">Part of the twin-arginine translocation (Tat) system that transports large folded proteins containing a characteristic twin-arginine motif in their signal peptide across membranes. TatA could form the protein-conducting channel of the Tat system.</text>
</comment>
<comment type="subunit">
    <text evidence="1">The Tat system comprises two distinct complexes: a TatABC complex, containing multiple copies of TatA, TatB and TatC subunits, and a separate TatA complex, containing only TatA subunits. Substrates initially bind to the TatABC complex, which probably triggers association of the separate TatA complex to form the active translocon.</text>
</comment>
<comment type="subcellular location">
    <subcellularLocation>
        <location evidence="1">Cell inner membrane</location>
        <topology evidence="1">Single-pass membrane protein</topology>
    </subcellularLocation>
</comment>
<comment type="similarity">
    <text evidence="1">Belongs to the TatA/E family.</text>
</comment>
<reference key="1">
    <citation type="submission" date="2003-06" db="EMBL/GenBank/DDBJ databases">
        <title>The complete genome sequence of Haemophilus ducreyi.</title>
        <authorList>
            <person name="Munson R.S. Jr."/>
            <person name="Ray W.C."/>
            <person name="Mahairas G."/>
            <person name="Sabo P."/>
            <person name="Mungur R."/>
            <person name="Johnson L."/>
            <person name="Nguyen D."/>
            <person name="Wang J."/>
            <person name="Forst C."/>
            <person name="Hood L."/>
        </authorList>
    </citation>
    <scope>NUCLEOTIDE SEQUENCE [LARGE SCALE GENOMIC DNA]</scope>
    <source>
        <strain>35000HP / ATCC 700724</strain>
    </source>
</reference>
<evidence type="ECO:0000255" key="1">
    <source>
        <dbReference type="HAMAP-Rule" id="MF_00236"/>
    </source>
</evidence>
<evidence type="ECO:0000256" key="2">
    <source>
        <dbReference type="SAM" id="MobiDB-lite"/>
    </source>
</evidence>
<feature type="chain" id="PRO_0000097937" description="Sec-independent protein translocase protein TatA">
    <location>
        <begin position="1"/>
        <end position="74"/>
    </location>
</feature>
<feature type="transmembrane region" description="Helical" evidence="1">
    <location>
        <begin position="1"/>
        <end position="21"/>
    </location>
</feature>
<feature type="region of interest" description="Disordered" evidence="2">
    <location>
        <begin position="51"/>
        <end position="74"/>
    </location>
</feature>
<accession>Q7VN63</accession>